<proteinExistence type="inferred from homology"/>
<dbReference type="EC" id="6.3.2.4" evidence="2"/>
<dbReference type="EMBL" id="BX936398">
    <property type="protein sequence ID" value="CAH19930.1"/>
    <property type="molecule type" value="Genomic_DNA"/>
</dbReference>
<dbReference type="RefSeq" id="WP_002210432.1">
    <property type="nucleotide sequence ID" value="NZ_CP009712.1"/>
</dbReference>
<dbReference type="SMR" id="Q66EK3"/>
<dbReference type="KEGG" id="ypo:BZ17_1865"/>
<dbReference type="KEGG" id="yps:YPTB0690"/>
<dbReference type="PATRIC" id="fig|273123.14.peg.1979"/>
<dbReference type="UniPathway" id="UPA00219"/>
<dbReference type="Proteomes" id="UP000001011">
    <property type="component" value="Chromosome"/>
</dbReference>
<dbReference type="GO" id="GO:0005829">
    <property type="term" value="C:cytosol"/>
    <property type="evidence" value="ECO:0007669"/>
    <property type="project" value="TreeGrafter"/>
</dbReference>
<dbReference type="GO" id="GO:0005524">
    <property type="term" value="F:ATP binding"/>
    <property type="evidence" value="ECO:0007669"/>
    <property type="project" value="UniProtKB-KW"/>
</dbReference>
<dbReference type="GO" id="GO:0008716">
    <property type="term" value="F:D-alanine-D-alanine ligase activity"/>
    <property type="evidence" value="ECO:0007669"/>
    <property type="project" value="UniProtKB-UniRule"/>
</dbReference>
<dbReference type="GO" id="GO:0046872">
    <property type="term" value="F:metal ion binding"/>
    <property type="evidence" value="ECO:0007669"/>
    <property type="project" value="UniProtKB-KW"/>
</dbReference>
<dbReference type="GO" id="GO:0071555">
    <property type="term" value="P:cell wall organization"/>
    <property type="evidence" value="ECO:0007669"/>
    <property type="project" value="UniProtKB-KW"/>
</dbReference>
<dbReference type="GO" id="GO:0009252">
    <property type="term" value="P:peptidoglycan biosynthetic process"/>
    <property type="evidence" value="ECO:0007669"/>
    <property type="project" value="UniProtKB-UniRule"/>
</dbReference>
<dbReference type="GO" id="GO:0008360">
    <property type="term" value="P:regulation of cell shape"/>
    <property type="evidence" value="ECO:0007669"/>
    <property type="project" value="UniProtKB-KW"/>
</dbReference>
<dbReference type="FunFam" id="3.30.1490.20:FF:000007">
    <property type="entry name" value="D-alanine--D-alanine ligase"/>
    <property type="match status" value="1"/>
</dbReference>
<dbReference type="FunFam" id="3.30.470.20:FF:000008">
    <property type="entry name" value="D-alanine--D-alanine ligase"/>
    <property type="match status" value="1"/>
</dbReference>
<dbReference type="FunFam" id="3.40.50.20:FF:000013">
    <property type="entry name" value="D-alanine--D-alanine ligase"/>
    <property type="match status" value="1"/>
</dbReference>
<dbReference type="Gene3D" id="3.40.50.20">
    <property type="match status" value="1"/>
</dbReference>
<dbReference type="Gene3D" id="3.30.1490.20">
    <property type="entry name" value="ATP-grasp fold, A domain"/>
    <property type="match status" value="1"/>
</dbReference>
<dbReference type="Gene3D" id="3.30.470.20">
    <property type="entry name" value="ATP-grasp fold, B domain"/>
    <property type="match status" value="1"/>
</dbReference>
<dbReference type="HAMAP" id="MF_00047">
    <property type="entry name" value="Dala_Dala_lig"/>
    <property type="match status" value="1"/>
</dbReference>
<dbReference type="InterPro" id="IPR011761">
    <property type="entry name" value="ATP-grasp"/>
</dbReference>
<dbReference type="InterPro" id="IPR013815">
    <property type="entry name" value="ATP_grasp_subdomain_1"/>
</dbReference>
<dbReference type="InterPro" id="IPR000291">
    <property type="entry name" value="D-Ala_lig_Van_CS"/>
</dbReference>
<dbReference type="InterPro" id="IPR005905">
    <property type="entry name" value="D_ala_D_ala"/>
</dbReference>
<dbReference type="InterPro" id="IPR011095">
    <property type="entry name" value="Dala_Dala_lig_C"/>
</dbReference>
<dbReference type="InterPro" id="IPR011127">
    <property type="entry name" value="Dala_Dala_lig_N"/>
</dbReference>
<dbReference type="InterPro" id="IPR016185">
    <property type="entry name" value="PreATP-grasp_dom_sf"/>
</dbReference>
<dbReference type="NCBIfam" id="TIGR01205">
    <property type="entry name" value="D_ala_D_alaTIGR"/>
    <property type="match status" value="1"/>
</dbReference>
<dbReference type="NCBIfam" id="NF002378">
    <property type="entry name" value="PRK01372.1"/>
    <property type="match status" value="1"/>
</dbReference>
<dbReference type="PANTHER" id="PTHR23132">
    <property type="entry name" value="D-ALANINE--D-ALANINE LIGASE"/>
    <property type="match status" value="1"/>
</dbReference>
<dbReference type="PANTHER" id="PTHR23132:SF23">
    <property type="entry name" value="D-ALANINE--D-ALANINE LIGASE B"/>
    <property type="match status" value="1"/>
</dbReference>
<dbReference type="Pfam" id="PF07478">
    <property type="entry name" value="Dala_Dala_lig_C"/>
    <property type="match status" value="1"/>
</dbReference>
<dbReference type="Pfam" id="PF01820">
    <property type="entry name" value="Dala_Dala_lig_N"/>
    <property type="match status" value="1"/>
</dbReference>
<dbReference type="PIRSF" id="PIRSF039102">
    <property type="entry name" value="Ddl/VanB"/>
    <property type="match status" value="1"/>
</dbReference>
<dbReference type="SUPFAM" id="SSF56059">
    <property type="entry name" value="Glutathione synthetase ATP-binding domain-like"/>
    <property type="match status" value="1"/>
</dbReference>
<dbReference type="SUPFAM" id="SSF52440">
    <property type="entry name" value="PreATP-grasp domain"/>
    <property type="match status" value="1"/>
</dbReference>
<dbReference type="PROSITE" id="PS50975">
    <property type="entry name" value="ATP_GRASP"/>
    <property type="match status" value="1"/>
</dbReference>
<dbReference type="PROSITE" id="PS00843">
    <property type="entry name" value="DALA_DALA_LIGASE_1"/>
    <property type="match status" value="1"/>
</dbReference>
<dbReference type="PROSITE" id="PS00844">
    <property type="entry name" value="DALA_DALA_LIGASE_2"/>
    <property type="match status" value="1"/>
</dbReference>
<evidence type="ECO:0000250" key="1"/>
<evidence type="ECO:0000255" key="2">
    <source>
        <dbReference type="HAMAP-Rule" id="MF_00047"/>
    </source>
</evidence>
<name>DDL_YERPS</name>
<feature type="chain" id="PRO_1000030523" description="D-alanine--D-alanine ligase">
    <location>
        <begin position="1"/>
        <end position="306"/>
    </location>
</feature>
<feature type="domain" description="ATP-grasp" evidence="2">
    <location>
        <begin position="101"/>
        <end position="303"/>
    </location>
</feature>
<feature type="binding site" evidence="2">
    <location>
        <begin position="134"/>
        <end position="189"/>
    </location>
    <ligand>
        <name>ATP</name>
        <dbReference type="ChEBI" id="CHEBI:30616"/>
    </ligand>
</feature>
<feature type="binding site" evidence="2">
    <location>
        <position position="257"/>
    </location>
    <ligand>
        <name>Mg(2+)</name>
        <dbReference type="ChEBI" id="CHEBI:18420"/>
        <label>1</label>
    </ligand>
</feature>
<feature type="binding site" evidence="2">
    <location>
        <position position="270"/>
    </location>
    <ligand>
        <name>Mg(2+)</name>
        <dbReference type="ChEBI" id="CHEBI:18420"/>
        <label>1</label>
    </ligand>
</feature>
<feature type="binding site" evidence="2">
    <location>
        <position position="270"/>
    </location>
    <ligand>
        <name>Mg(2+)</name>
        <dbReference type="ChEBI" id="CHEBI:18420"/>
        <label>2</label>
    </ligand>
</feature>
<feature type="binding site" evidence="2">
    <location>
        <position position="272"/>
    </location>
    <ligand>
        <name>Mg(2+)</name>
        <dbReference type="ChEBI" id="CHEBI:18420"/>
        <label>2</label>
    </ligand>
</feature>
<protein>
    <recommendedName>
        <fullName evidence="2">D-alanine--D-alanine ligase</fullName>
        <ecNumber evidence="2">6.3.2.4</ecNumber>
    </recommendedName>
    <alternativeName>
        <fullName evidence="2">D-Ala-D-Ala ligase</fullName>
    </alternativeName>
    <alternativeName>
        <fullName evidence="2">D-alanylalanine synthetase</fullName>
    </alternativeName>
</protein>
<gene>
    <name evidence="2" type="primary">ddl</name>
    <name type="ordered locus">YPTB0690</name>
</gene>
<sequence>MAEKVAVLLGGTSAEREVSLLSGQAVLAGLKEAGIDAYGVDTKDFPVTQLKEQGFDKVFIALHGRGGEDGTLQGVLEFLQLPYTGSGVMASALTMDKLRTKLVWQALGLPISPYVALNRQQFETLSPEELVACVAKLGLPLIVKPSHEGSSVGMSKVDHASELQKALVEAFQHDSDVLIEKWLSGPEFTVAILGDEVLPSIRIQPPGVFYDYDAKYLSDKTQYFCPSGLSDESEQQLAALALQAYHALDCSGWGRVDVMQDRDGHFYLLEVNTSPGMTSHSLVPMAARQYGLSFSQLVARILMLAD</sequence>
<organism>
    <name type="scientific">Yersinia pseudotuberculosis serotype I (strain IP32953)</name>
    <dbReference type="NCBI Taxonomy" id="273123"/>
    <lineage>
        <taxon>Bacteria</taxon>
        <taxon>Pseudomonadati</taxon>
        <taxon>Pseudomonadota</taxon>
        <taxon>Gammaproteobacteria</taxon>
        <taxon>Enterobacterales</taxon>
        <taxon>Yersiniaceae</taxon>
        <taxon>Yersinia</taxon>
    </lineage>
</organism>
<comment type="function">
    <text evidence="2">Cell wall formation.</text>
</comment>
<comment type="catalytic activity">
    <reaction evidence="2">
        <text>2 D-alanine + ATP = D-alanyl-D-alanine + ADP + phosphate + H(+)</text>
        <dbReference type="Rhea" id="RHEA:11224"/>
        <dbReference type="ChEBI" id="CHEBI:15378"/>
        <dbReference type="ChEBI" id="CHEBI:30616"/>
        <dbReference type="ChEBI" id="CHEBI:43474"/>
        <dbReference type="ChEBI" id="CHEBI:57416"/>
        <dbReference type="ChEBI" id="CHEBI:57822"/>
        <dbReference type="ChEBI" id="CHEBI:456216"/>
        <dbReference type="EC" id="6.3.2.4"/>
    </reaction>
</comment>
<comment type="cofactor">
    <cofactor evidence="1">
        <name>Mg(2+)</name>
        <dbReference type="ChEBI" id="CHEBI:18420"/>
    </cofactor>
    <cofactor evidence="1">
        <name>Mn(2+)</name>
        <dbReference type="ChEBI" id="CHEBI:29035"/>
    </cofactor>
    <text evidence="1">Binds 2 magnesium or manganese ions per subunit.</text>
</comment>
<comment type="pathway">
    <text evidence="2">Cell wall biogenesis; peptidoglycan biosynthesis.</text>
</comment>
<comment type="subcellular location">
    <subcellularLocation>
        <location evidence="2">Cytoplasm</location>
    </subcellularLocation>
</comment>
<comment type="similarity">
    <text evidence="2">Belongs to the D-alanine--D-alanine ligase family.</text>
</comment>
<accession>Q66EK3</accession>
<reference key="1">
    <citation type="journal article" date="2004" name="Proc. Natl. Acad. Sci. U.S.A.">
        <title>Insights into the evolution of Yersinia pestis through whole-genome comparison with Yersinia pseudotuberculosis.</title>
        <authorList>
            <person name="Chain P.S.G."/>
            <person name="Carniel E."/>
            <person name="Larimer F.W."/>
            <person name="Lamerdin J."/>
            <person name="Stoutland P.O."/>
            <person name="Regala W.M."/>
            <person name="Georgescu A.M."/>
            <person name="Vergez L.M."/>
            <person name="Land M.L."/>
            <person name="Motin V.L."/>
            <person name="Brubaker R.R."/>
            <person name="Fowler J."/>
            <person name="Hinnebusch J."/>
            <person name="Marceau M."/>
            <person name="Medigue C."/>
            <person name="Simonet M."/>
            <person name="Chenal-Francisque V."/>
            <person name="Souza B."/>
            <person name="Dacheux D."/>
            <person name="Elliott J.M."/>
            <person name="Derbise A."/>
            <person name="Hauser L.J."/>
            <person name="Garcia E."/>
        </authorList>
    </citation>
    <scope>NUCLEOTIDE SEQUENCE [LARGE SCALE GENOMIC DNA]</scope>
    <source>
        <strain>IP32953</strain>
    </source>
</reference>
<keyword id="KW-0067">ATP-binding</keyword>
<keyword id="KW-0133">Cell shape</keyword>
<keyword id="KW-0961">Cell wall biogenesis/degradation</keyword>
<keyword id="KW-0963">Cytoplasm</keyword>
<keyword id="KW-0436">Ligase</keyword>
<keyword id="KW-0460">Magnesium</keyword>
<keyword id="KW-0464">Manganese</keyword>
<keyword id="KW-0479">Metal-binding</keyword>
<keyword id="KW-0547">Nucleotide-binding</keyword>
<keyword id="KW-0573">Peptidoglycan synthesis</keyword>